<dbReference type="EMBL" id="AE016853">
    <property type="protein sequence ID" value="AAO53773.1"/>
    <property type="molecule type" value="Genomic_DNA"/>
</dbReference>
<dbReference type="RefSeq" id="NP_790078.1">
    <property type="nucleotide sequence ID" value="NC_004578.1"/>
</dbReference>
<dbReference type="RefSeq" id="WP_005768497.1">
    <property type="nucleotide sequence ID" value="NC_004578.1"/>
</dbReference>
<dbReference type="SMR" id="Q88B06"/>
<dbReference type="STRING" id="223283.PSPTO_0227"/>
<dbReference type="GeneID" id="1181835"/>
<dbReference type="KEGG" id="pst:PSPTO_0227"/>
<dbReference type="PATRIC" id="fig|223283.9.peg.236"/>
<dbReference type="eggNOG" id="COG1965">
    <property type="taxonomic scope" value="Bacteria"/>
</dbReference>
<dbReference type="HOGENOM" id="CLU_080880_3_0_6"/>
<dbReference type="OrthoDB" id="285675at2"/>
<dbReference type="PhylomeDB" id="Q88B06"/>
<dbReference type="Proteomes" id="UP000002515">
    <property type="component" value="Chromosome"/>
</dbReference>
<dbReference type="GO" id="GO:0005829">
    <property type="term" value="C:cytosol"/>
    <property type="evidence" value="ECO:0007669"/>
    <property type="project" value="TreeGrafter"/>
</dbReference>
<dbReference type="GO" id="GO:0008199">
    <property type="term" value="F:ferric iron binding"/>
    <property type="evidence" value="ECO:0007669"/>
    <property type="project" value="InterPro"/>
</dbReference>
<dbReference type="GO" id="GO:0008198">
    <property type="term" value="F:ferrous iron binding"/>
    <property type="evidence" value="ECO:0007669"/>
    <property type="project" value="TreeGrafter"/>
</dbReference>
<dbReference type="GO" id="GO:0016226">
    <property type="term" value="P:iron-sulfur cluster assembly"/>
    <property type="evidence" value="ECO:0007669"/>
    <property type="project" value="UniProtKB-UniRule"/>
</dbReference>
<dbReference type="Gene3D" id="3.30.920.10">
    <property type="entry name" value="Frataxin/CyaY"/>
    <property type="match status" value="1"/>
</dbReference>
<dbReference type="HAMAP" id="MF_00142">
    <property type="entry name" value="CyaY"/>
    <property type="match status" value="1"/>
</dbReference>
<dbReference type="InterPro" id="IPR047584">
    <property type="entry name" value="CyaY"/>
</dbReference>
<dbReference type="InterPro" id="IPR002908">
    <property type="entry name" value="Frataxin/CyaY"/>
</dbReference>
<dbReference type="InterPro" id="IPR036524">
    <property type="entry name" value="Frataxin/CyaY_sf"/>
</dbReference>
<dbReference type="InterPro" id="IPR020895">
    <property type="entry name" value="Frataxin_CS"/>
</dbReference>
<dbReference type="NCBIfam" id="TIGR03421">
    <property type="entry name" value="FeS_CyaY"/>
    <property type="match status" value="1"/>
</dbReference>
<dbReference type="PANTHER" id="PTHR16821">
    <property type="entry name" value="FRATAXIN"/>
    <property type="match status" value="1"/>
</dbReference>
<dbReference type="PANTHER" id="PTHR16821:SF2">
    <property type="entry name" value="FRATAXIN, MITOCHONDRIAL"/>
    <property type="match status" value="1"/>
</dbReference>
<dbReference type="Pfam" id="PF01491">
    <property type="entry name" value="Frataxin_Cyay"/>
    <property type="match status" value="1"/>
</dbReference>
<dbReference type="SMART" id="SM01219">
    <property type="entry name" value="Frataxin_Cyay"/>
    <property type="match status" value="1"/>
</dbReference>
<dbReference type="SUPFAM" id="SSF55387">
    <property type="entry name" value="Frataxin/Nqo15-like"/>
    <property type="match status" value="1"/>
</dbReference>
<dbReference type="PROSITE" id="PS01344">
    <property type="entry name" value="FRATAXIN_1"/>
    <property type="match status" value="1"/>
</dbReference>
<dbReference type="PROSITE" id="PS50810">
    <property type="entry name" value="FRATAXIN_2"/>
    <property type="match status" value="1"/>
</dbReference>
<keyword id="KW-0408">Iron</keyword>
<keyword id="KW-0479">Metal-binding</keyword>
<keyword id="KW-1185">Reference proteome</keyword>
<sequence length="110" mass="12415">MSLTEARFHDLVDATQQNIEDVFDESGLDVDLENSAGVLTVKFEGGSQLIFSRQEPLRQLWLAAKSGGFHFDYDEEESRWACDTSDELLSEMLARMTFEQAGADLDFSEI</sequence>
<gene>
    <name evidence="1" type="primary">cyaY</name>
    <name type="ordered locus">PSPTO_0227</name>
</gene>
<feature type="chain" id="PRO_0000193953" description="Iron-sulfur cluster assembly protein CyaY">
    <location>
        <begin position="1"/>
        <end position="110"/>
    </location>
</feature>
<proteinExistence type="inferred from homology"/>
<protein>
    <recommendedName>
        <fullName evidence="1">Iron-sulfur cluster assembly protein CyaY</fullName>
    </recommendedName>
</protein>
<comment type="function">
    <text evidence="1">Involved in iron-sulfur (Fe-S) cluster assembly. May act as a regulator of Fe-S biogenesis.</text>
</comment>
<comment type="similarity">
    <text evidence="1">Belongs to the frataxin family.</text>
</comment>
<accession>Q88B06</accession>
<evidence type="ECO:0000255" key="1">
    <source>
        <dbReference type="HAMAP-Rule" id="MF_00142"/>
    </source>
</evidence>
<reference key="1">
    <citation type="journal article" date="2003" name="Proc. Natl. Acad. Sci. U.S.A.">
        <title>The complete genome sequence of the Arabidopsis and tomato pathogen Pseudomonas syringae pv. tomato DC3000.</title>
        <authorList>
            <person name="Buell C.R."/>
            <person name="Joardar V."/>
            <person name="Lindeberg M."/>
            <person name="Selengut J."/>
            <person name="Paulsen I.T."/>
            <person name="Gwinn M.L."/>
            <person name="Dodson R.J."/>
            <person name="DeBoy R.T."/>
            <person name="Durkin A.S."/>
            <person name="Kolonay J.F."/>
            <person name="Madupu R."/>
            <person name="Daugherty S.C."/>
            <person name="Brinkac L.M."/>
            <person name="Beanan M.J."/>
            <person name="Haft D.H."/>
            <person name="Nelson W.C."/>
            <person name="Davidsen T.M."/>
            <person name="Zafar N."/>
            <person name="Zhou L."/>
            <person name="Liu J."/>
            <person name="Yuan Q."/>
            <person name="Khouri H.M."/>
            <person name="Fedorova N.B."/>
            <person name="Tran B."/>
            <person name="Russell D."/>
            <person name="Berry K.J."/>
            <person name="Utterback T.R."/>
            <person name="Van Aken S.E."/>
            <person name="Feldblyum T.V."/>
            <person name="D'Ascenzo M."/>
            <person name="Deng W.-L."/>
            <person name="Ramos A.R."/>
            <person name="Alfano J.R."/>
            <person name="Cartinhour S."/>
            <person name="Chatterjee A.K."/>
            <person name="Delaney T.P."/>
            <person name="Lazarowitz S.G."/>
            <person name="Martin G.B."/>
            <person name="Schneider D.J."/>
            <person name="Tang X."/>
            <person name="Bender C.L."/>
            <person name="White O."/>
            <person name="Fraser C.M."/>
            <person name="Collmer A."/>
        </authorList>
    </citation>
    <scope>NUCLEOTIDE SEQUENCE [LARGE SCALE GENOMIC DNA]</scope>
    <source>
        <strain>ATCC BAA-871 / DC3000</strain>
    </source>
</reference>
<organism>
    <name type="scientific">Pseudomonas syringae pv. tomato (strain ATCC BAA-871 / DC3000)</name>
    <dbReference type="NCBI Taxonomy" id="223283"/>
    <lineage>
        <taxon>Bacteria</taxon>
        <taxon>Pseudomonadati</taxon>
        <taxon>Pseudomonadota</taxon>
        <taxon>Gammaproteobacteria</taxon>
        <taxon>Pseudomonadales</taxon>
        <taxon>Pseudomonadaceae</taxon>
        <taxon>Pseudomonas</taxon>
    </lineage>
</organism>
<name>CYAY_PSESM</name>